<gene>
    <name evidence="5" type="primary">syrB1</name>
</gene>
<name>SYRB1_PSESY</name>
<proteinExistence type="evidence at protein level"/>
<reference key="1">
    <citation type="journal article" date="1995" name="J. Bacteriol.">
        <title>Analysis of the syrB and syrC genes of Pseudomonas syringae pv. syringae indicates that syringomycin is synthesized by a thiotemplate mechanism.</title>
        <authorList>
            <person name="Zhang J.H."/>
            <person name="Quigley N.B."/>
            <person name="Gross D.C."/>
        </authorList>
    </citation>
    <scope>NUCLEOTIDE SEQUENCE [GENOMIC DNA]</scope>
    <source>
        <strain>B301D</strain>
    </source>
</reference>
<reference key="2">
    <citation type="journal article" date="1998" name="J. Biol. Chem.">
        <title>Characterization of the syringomycin synthetase gene cluster. A link between prokaryotic and eukaryotic peptide synthetases.</title>
        <authorList>
            <person name="Guenzi E."/>
            <person name="Galli G."/>
            <person name="Grgurina I."/>
            <person name="Gross D.C."/>
            <person name="Grandi G."/>
        </authorList>
    </citation>
    <scope>NUCLEOTIDE SEQUENCE [GENOMIC DNA]</scope>
    <scope>SEQUENCE REVISION</scope>
    <scope>FUNCTION</scope>
    <scope>CATALYTIC ACTIVITY</scope>
    <source>
        <strain>B301D</strain>
    </source>
</reference>
<reference key="3">
    <citation type="journal article" date="2001" name="Mol. Plant Microbe Interact.">
        <title>The contribution of syringopeptin and syringomycin to virulence of Pseudomonas syringae pv. syringae strain B301D on the basis of sypA and syrB1 biosynthesis mutant analysis.</title>
        <authorList>
            <person name="Scholz-Schroeder B.K."/>
            <person name="Hutchison M.L."/>
            <person name="Grgurina I."/>
            <person name="Gross D.C."/>
        </authorList>
    </citation>
    <scope>DISRUPTION PHENOTYPE</scope>
    <source>
        <strain>B301D</strain>
    </source>
</reference>
<reference key="4">
    <citation type="journal article" date="2005" name="Proc. Natl. Acad. Sci. U.S.A.">
        <title>SyrB2 in syringomycin E biosynthesis is a nonheme FeII alpha-ketoglutarate- and O2-dependent halogenase.</title>
        <authorList>
            <person name="Vaillancourt F.H."/>
            <person name="Yin J."/>
            <person name="Walsh C.T."/>
        </authorList>
    </citation>
    <scope>FUNCTION</scope>
    <scope>CATALYTIC ACTIVITY</scope>
    <scope>BIOPHYSICOCHEMICAL PROPERTIES</scope>
    <source>
        <strain>B301D</strain>
    </source>
</reference>
<protein>
    <recommendedName>
        <fullName evidence="6">Syringomycin synthase SyrB1</fullName>
        <ecNumber evidence="3 8">6.2.1.70</ecNumber>
    </recommendedName>
    <alternativeName>
        <fullName evidence="6">L-threonine--[L-threonyl-carrier protein] ligase</fullName>
    </alternativeName>
    <alternativeName>
        <fullName evidence="9">Syringomycin biosynthesis enzyme 1</fullName>
    </alternativeName>
</protein>
<organism>
    <name type="scientific">Pseudomonas syringae pv. syringae</name>
    <dbReference type="NCBI Taxonomy" id="321"/>
    <lineage>
        <taxon>Bacteria</taxon>
        <taxon>Pseudomonadati</taxon>
        <taxon>Pseudomonadota</taxon>
        <taxon>Gammaproteobacteria</taxon>
        <taxon>Pseudomonadales</taxon>
        <taxon>Pseudomonadaceae</taxon>
        <taxon>Pseudomonas</taxon>
        <taxon>Pseudomonas syringae</taxon>
    </lineage>
</organism>
<sequence length="614" mass="66144">MPITNTDESLSAASAPLKPGAFLHEIFSDRARQFPERTAVSDAARTLSYAQLDALSTKLAARLRDEGVTYGTRVGMYLPRSVDLVTSLLGILKAGGTYVPVDPQYPGKRVEHIVRDSELSLIIGDAANLPKISSLRVLALDELLSAPALQPAAQDTRIDPNNSTAYIIYTSGSTGEPKGVQVSHGNVSRLLESTQRAYGFNAQDVWSMFHSIGFDFSVWEIWGALAHGGQVAVVPYDISRSPAALRQWLADQRITVLSQTPSAFRGLDEADRGNTAPLALRYVVLGGEALPASVLRPWVERHGDQKPALINMYGITEATVHTTFKRVLAQDLETAAMVSLGKPLDGWRLHLLDANQAPVAAGTTGELYIEGAGVAQGYLNREALNVERFVELPGAVRAYRTGDLMTLESNGEYRYAGRCDEQLKISGFRIEPGEIEASLQTSPSVAAAHVGVHDYGDGDLRLVAYVVPGQGVDAWTEQARSEVAALMAENLPGYMRPSVYVPLAELPVTHHGKIDKQQLPSPAAGTALSGAADVKGLSEQEHFVLKVWSEDLGLKNIGVNDDFFDSGGTSLALIRSLSKLKTHYKINLDPGILADGATAKVLADHITRSLVQAH</sequence>
<evidence type="ECO:0000255" key="1">
    <source>
        <dbReference type="PROSITE-ProRule" id="PRU00258"/>
    </source>
</evidence>
<evidence type="ECO:0000269" key="2">
    <source>
    </source>
</evidence>
<evidence type="ECO:0000269" key="3">
    <source>
    </source>
</evidence>
<evidence type="ECO:0000269" key="4">
    <source>
    </source>
</evidence>
<evidence type="ECO:0000303" key="5">
    <source>
    </source>
</evidence>
<evidence type="ECO:0000305" key="6"/>
<evidence type="ECO:0000305" key="7">
    <source>
    </source>
</evidence>
<evidence type="ECO:0000305" key="8">
    <source>
    </source>
</evidence>
<evidence type="ECO:0000312" key="9">
    <source>
        <dbReference type="EMBL" id="AAA85160.2"/>
    </source>
</evidence>
<keyword id="KW-0436">Ligase</keyword>
<keyword id="KW-0596">Phosphopantetheine</keyword>
<keyword id="KW-0597">Phosphoprotein</keyword>
<dbReference type="EC" id="6.2.1.70" evidence="3 8"/>
<dbReference type="EMBL" id="U25130">
    <property type="protein sequence ID" value="AAA85160.2"/>
    <property type="molecule type" value="Genomic_DNA"/>
</dbReference>
<dbReference type="RefSeq" id="WP_032655800.1">
    <property type="nucleotide sequence ID" value="NZ_VBUL01000016.1"/>
</dbReference>
<dbReference type="SMR" id="Q52400"/>
<dbReference type="KEGG" id="ag:AAA85160"/>
<dbReference type="BioCyc" id="MetaCyc:MONOMER-20501"/>
<dbReference type="BRENDA" id="6.2.1.70">
    <property type="organism ID" value="12469"/>
</dbReference>
<dbReference type="GO" id="GO:0005829">
    <property type="term" value="C:cytosol"/>
    <property type="evidence" value="ECO:0007669"/>
    <property type="project" value="TreeGrafter"/>
</dbReference>
<dbReference type="GO" id="GO:0016874">
    <property type="term" value="F:ligase activity"/>
    <property type="evidence" value="ECO:0007669"/>
    <property type="project" value="UniProtKB-KW"/>
</dbReference>
<dbReference type="GO" id="GO:0031177">
    <property type="term" value="F:phosphopantetheine binding"/>
    <property type="evidence" value="ECO:0007669"/>
    <property type="project" value="TreeGrafter"/>
</dbReference>
<dbReference type="GO" id="GO:0043041">
    <property type="term" value="P:amino acid activation for nonribosomal peptide biosynthetic process"/>
    <property type="evidence" value="ECO:0007669"/>
    <property type="project" value="TreeGrafter"/>
</dbReference>
<dbReference type="GO" id="GO:0044550">
    <property type="term" value="P:secondary metabolite biosynthetic process"/>
    <property type="evidence" value="ECO:0007669"/>
    <property type="project" value="TreeGrafter"/>
</dbReference>
<dbReference type="CDD" id="cd17643">
    <property type="entry name" value="A_NRPS_Cytc1-like"/>
    <property type="match status" value="1"/>
</dbReference>
<dbReference type="FunFam" id="3.40.50.980:FF:000002">
    <property type="entry name" value="Enterobactin synthetase component F"/>
    <property type="match status" value="1"/>
</dbReference>
<dbReference type="FunFam" id="3.40.50.12780:FF:000012">
    <property type="entry name" value="Non-ribosomal peptide synthetase"/>
    <property type="match status" value="1"/>
</dbReference>
<dbReference type="FunFam" id="3.40.50.980:FF:000001">
    <property type="entry name" value="Non-ribosomal peptide synthetase"/>
    <property type="match status" value="1"/>
</dbReference>
<dbReference type="Gene3D" id="3.30.300.30">
    <property type="match status" value="1"/>
</dbReference>
<dbReference type="Gene3D" id="1.10.1200.10">
    <property type="entry name" value="ACP-like"/>
    <property type="match status" value="1"/>
</dbReference>
<dbReference type="Gene3D" id="3.40.50.12780">
    <property type="entry name" value="N-terminal domain of ligase-like"/>
    <property type="match status" value="1"/>
</dbReference>
<dbReference type="InterPro" id="IPR010071">
    <property type="entry name" value="AA_adenyl_dom"/>
</dbReference>
<dbReference type="InterPro" id="IPR036736">
    <property type="entry name" value="ACP-like_sf"/>
</dbReference>
<dbReference type="InterPro" id="IPR025110">
    <property type="entry name" value="AMP-bd_C"/>
</dbReference>
<dbReference type="InterPro" id="IPR045851">
    <property type="entry name" value="AMP-bd_C_sf"/>
</dbReference>
<dbReference type="InterPro" id="IPR020845">
    <property type="entry name" value="AMP-binding_CS"/>
</dbReference>
<dbReference type="InterPro" id="IPR000873">
    <property type="entry name" value="AMP-dep_synth/lig_dom"/>
</dbReference>
<dbReference type="InterPro" id="IPR042099">
    <property type="entry name" value="ANL_N_sf"/>
</dbReference>
<dbReference type="InterPro" id="IPR009081">
    <property type="entry name" value="PP-bd_ACP"/>
</dbReference>
<dbReference type="NCBIfam" id="TIGR01733">
    <property type="entry name" value="AA-adenyl-dom"/>
    <property type="match status" value="1"/>
</dbReference>
<dbReference type="PANTHER" id="PTHR45527:SF1">
    <property type="entry name" value="FATTY ACID SYNTHASE"/>
    <property type="match status" value="1"/>
</dbReference>
<dbReference type="PANTHER" id="PTHR45527">
    <property type="entry name" value="NONRIBOSOMAL PEPTIDE SYNTHETASE"/>
    <property type="match status" value="1"/>
</dbReference>
<dbReference type="Pfam" id="PF00501">
    <property type="entry name" value="AMP-binding"/>
    <property type="match status" value="1"/>
</dbReference>
<dbReference type="Pfam" id="PF13193">
    <property type="entry name" value="AMP-binding_C"/>
    <property type="match status" value="1"/>
</dbReference>
<dbReference type="Pfam" id="PF00550">
    <property type="entry name" value="PP-binding"/>
    <property type="match status" value="1"/>
</dbReference>
<dbReference type="SUPFAM" id="SSF56801">
    <property type="entry name" value="Acetyl-CoA synthetase-like"/>
    <property type="match status" value="1"/>
</dbReference>
<dbReference type="SUPFAM" id="SSF47336">
    <property type="entry name" value="ACP-like"/>
    <property type="match status" value="1"/>
</dbReference>
<dbReference type="PROSITE" id="PS00455">
    <property type="entry name" value="AMP_BINDING"/>
    <property type="match status" value="1"/>
</dbReference>
<dbReference type="PROSITE" id="PS50075">
    <property type="entry name" value="CARRIER"/>
    <property type="match status" value="1"/>
</dbReference>
<accession>Q52400</accession>
<feature type="chain" id="PRO_0000454786" description="Syringomycin synthase SyrB1">
    <location>
        <begin position="1"/>
        <end position="614"/>
    </location>
</feature>
<feature type="domain" description="Carrier" evidence="1">
    <location>
        <begin position="535"/>
        <end position="610"/>
    </location>
</feature>
<feature type="modified residue" description="O-(pantetheine 4'-phosphoryl)serine" evidence="1">
    <location>
        <position position="570"/>
    </location>
</feature>
<comment type="function">
    <text evidence="3 4">Involved in the biosynthesis of syringomycin E, a cyclic lipodepsinonapeptide toxin with phytotoxic activity (PubMed:9830033). Specifically adenylates L-threonine and loads it onto its peptidyl carrier domain, via a thioester linkage to the phosphopanthetheine moiety (PubMed:16002467, PubMed:9830033). Is highly specific for L-threonine (PubMed:16002467).</text>
</comment>
<comment type="catalytic activity">
    <reaction evidence="3 8">
        <text>holo-[peptidyl-carrier protein] + L-threonine + ATP = L-threonyl-[peptidyl-carrier protein] + AMP + diphosphate</text>
        <dbReference type="Rhea" id="RHEA:61688"/>
        <dbReference type="Rhea" id="RHEA-COMP:11480"/>
        <dbReference type="Rhea" id="RHEA-COMP:15908"/>
        <dbReference type="ChEBI" id="CHEBI:30616"/>
        <dbReference type="ChEBI" id="CHEBI:33019"/>
        <dbReference type="ChEBI" id="CHEBI:57926"/>
        <dbReference type="ChEBI" id="CHEBI:64479"/>
        <dbReference type="ChEBI" id="CHEBI:144927"/>
        <dbReference type="ChEBI" id="CHEBI:456215"/>
        <dbReference type="EC" id="6.2.1.70"/>
    </reaction>
    <physiologicalReaction direction="left-to-right" evidence="3 8">
        <dbReference type="Rhea" id="RHEA:61689"/>
    </physiologicalReaction>
</comment>
<comment type="cofactor">
    <cofactor evidence="7">
        <name>pantetheine 4'-phosphate</name>
        <dbReference type="ChEBI" id="CHEBI:47942"/>
    </cofactor>
</comment>
<comment type="biophysicochemical properties">
    <kinetics>
        <KM evidence="3">3.1 mM for L-threonine</KM>
        <KM evidence="3">7.7 mM for L-serine</KM>
        <text evidence="3">kcat is 29.1 min(-1) with L-threonine as substrate. kcat is 1.23 min(-1) with L-serine as substrate.</text>
    </kinetics>
</comment>
<comment type="disruption phenotype">
    <text evidence="2">Mutant is defective in syringomycin production but produces wild-type levels of syringopeptin. Mutation significantly reduces the virulence of strain B301D in immature sweet cherry fruits.</text>
</comment>
<comment type="similarity">
    <text evidence="6">Belongs to the ATP-dependent AMP-binding enzyme family.</text>
</comment>